<evidence type="ECO:0000250" key="1"/>
<evidence type="ECO:0000255" key="2">
    <source>
        <dbReference type="PROSITE-ProRule" id="PRU00156"/>
    </source>
</evidence>
<evidence type="ECO:0000305" key="3"/>
<protein>
    <recommendedName>
        <fullName>Peptidyl-prolyl cis-trans isomerase D</fullName>
        <shortName>PPIase D</shortName>
        <ecNumber>5.2.1.8</ecNumber>
    </recommendedName>
    <alternativeName>
        <fullName>Rotamase D</fullName>
    </alternativeName>
</protein>
<gene>
    <name type="primary">CPR6</name>
    <name type="ordered locus">KLLA0F05093g</name>
</gene>
<name>PPID_KLULA</name>
<accession>Q6CL78</accession>
<proteinExistence type="inferred from homology"/>
<organism>
    <name type="scientific">Kluyveromyces lactis (strain ATCC 8585 / CBS 2359 / DSM 70799 / NBRC 1267 / NRRL Y-1140 / WM37)</name>
    <name type="common">Yeast</name>
    <name type="synonym">Candida sphaerica</name>
    <dbReference type="NCBI Taxonomy" id="284590"/>
    <lineage>
        <taxon>Eukaryota</taxon>
        <taxon>Fungi</taxon>
        <taxon>Dikarya</taxon>
        <taxon>Ascomycota</taxon>
        <taxon>Saccharomycotina</taxon>
        <taxon>Saccharomycetes</taxon>
        <taxon>Saccharomycetales</taxon>
        <taxon>Saccharomycetaceae</taxon>
        <taxon>Kluyveromyces</taxon>
    </lineage>
</organism>
<reference key="1">
    <citation type="journal article" date="2004" name="Nature">
        <title>Genome evolution in yeasts.</title>
        <authorList>
            <person name="Dujon B."/>
            <person name="Sherman D."/>
            <person name="Fischer G."/>
            <person name="Durrens P."/>
            <person name="Casaregola S."/>
            <person name="Lafontaine I."/>
            <person name="de Montigny J."/>
            <person name="Marck C."/>
            <person name="Neuveglise C."/>
            <person name="Talla E."/>
            <person name="Goffard N."/>
            <person name="Frangeul L."/>
            <person name="Aigle M."/>
            <person name="Anthouard V."/>
            <person name="Babour A."/>
            <person name="Barbe V."/>
            <person name="Barnay S."/>
            <person name="Blanchin S."/>
            <person name="Beckerich J.-M."/>
            <person name="Beyne E."/>
            <person name="Bleykasten C."/>
            <person name="Boisrame A."/>
            <person name="Boyer J."/>
            <person name="Cattolico L."/>
            <person name="Confanioleri F."/>
            <person name="de Daruvar A."/>
            <person name="Despons L."/>
            <person name="Fabre E."/>
            <person name="Fairhead C."/>
            <person name="Ferry-Dumazet H."/>
            <person name="Groppi A."/>
            <person name="Hantraye F."/>
            <person name="Hennequin C."/>
            <person name="Jauniaux N."/>
            <person name="Joyet P."/>
            <person name="Kachouri R."/>
            <person name="Kerrest A."/>
            <person name="Koszul R."/>
            <person name="Lemaire M."/>
            <person name="Lesur I."/>
            <person name="Ma L."/>
            <person name="Muller H."/>
            <person name="Nicaud J.-M."/>
            <person name="Nikolski M."/>
            <person name="Oztas S."/>
            <person name="Ozier-Kalogeropoulos O."/>
            <person name="Pellenz S."/>
            <person name="Potier S."/>
            <person name="Richard G.-F."/>
            <person name="Straub M.-L."/>
            <person name="Suleau A."/>
            <person name="Swennen D."/>
            <person name="Tekaia F."/>
            <person name="Wesolowski-Louvel M."/>
            <person name="Westhof E."/>
            <person name="Wirth B."/>
            <person name="Zeniou-Meyer M."/>
            <person name="Zivanovic Y."/>
            <person name="Bolotin-Fukuhara M."/>
            <person name="Thierry A."/>
            <person name="Bouchier C."/>
            <person name="Caudron B."/>
            <person name="Scarpelli C."/>
            <person name="Gaillardin C."/>
            <person name="Weissenbach J."/>
            <person name="Wincker P."/>
            <person name="Souciet J.-L."/>
        </authorList>
    </citation>
    <scope>NUCLEOTIDE SEQUENCE [LARGE SCALE GENOMIC DNA]</scope>
    <source>
        <strain>ATCC 8585 / CBS 2359 / DSM 70799 / NBRC 1267 / NRRL Y-1140 / WM37</strain>
    </source>
</reference>
<keyword id="KW-0963">Cytoplasm</keyword>
<keyword id="KW-0413">Isomerase</keyword>
<keyword id="KW-1185">Reference proteome</keyword>
<keyword id="KW-0677">Repeat</keyword>
<keyword id="KW-0697">Rotamase</keyword>
<keyword id="KW-0802">TPR repeat</keyword>
<dbReference type="EC" id="5.2.1.8"/>
<dbReference type="EMBL" id="CR382126">
    <property type="protein sequence ID" value="CAG98019.1"/>
    <property type="molecule type" value="Genomic_DNA"/>
</dbReference>
<dbReference type="RefSeq" id="XP_455311.1">
    <property type="nucleotide sequence ID" value="XM_455311.1"/>
</dbReference>
<dbReference type="SMR" id="Q6CL78"/>
<dbReference type="FunCoup" id="Q6CL78">
    <property type="interactions" value="1163"/>
</dbReference>
<dbReference type="STRING" id="284590.Q6CL78"/>
<dbReference type="PaxDb" id="284590-Q6CL78"/>
<dbReference type="KEGG" id="kla:KLLA0_F05093g"/>
<dbReference type="eggNOG" id="KOG0546">
    <property type="taxonomic scope" value="Eukaryota"/>
</dbReference>
<dbReference type="HOGENOM" id="CLU_012062_37_0_1"/>
<dbReference type="InParanoid" id="Q6CL78"/>
<dbReference type="OMA" id="EMEQNCN"/>
<dbReference type="Proteomes" id="UP000000598">
    <property type="component" value="Chromosome F"/>
</dbReference>
<dbReference type="GO" id="GO:0005737">
    <property type="term" value="C:cytoplasm"/>
    <property type="evidence" value="ECO:0007669"/>
    <property type="project" value="UniProtKB-SubCell"/>
</dbReference>
<dbReference type="GO" id="GO:0043231">
    <property type="term" value="C:intracellular membrane-bounded organelle"/>
    <property type="evidence" value="ECO:0007669"/>
    <property type="project" value="TreeGrafter"/>
</dbReference>
<dbReference type="GO" id="GO:0016018">
    <property type="term" value="F:cyclosporin A binding"/>
    <property type="evidence" value="ECO:0007669"/>
    <property type="project" value="TreeGrafter"/>
</dbReference>
<dbReference type="GO" id="GO:0003755">
    <property type="term" value="F:peptidyl-prolyl cis-trans isomerase activity"/>
    <property type="evidence" value="ECO:0007669"/>
    <property type="project" value="UniProtKB-KW"/>
</dbReference>
<dbReference type="GO" id="GO:0006457">
    <property type="term" value="P:protein folding"/>
    <property type="evidence" value="ECO:0007669"/>
    <property type="project" value="InterPro"/>
</dbReference>
<dbReference type="CDD" id="cd01926">
    <property type="entry name" value="cyclophilin_ABH_like"/>
    <property type="match status" value="1"/>
</dbReference>
<dbReference type="FunFam" id="2.40.100.10:FF:000045">
    <property type="entry name" value="Peptidyl-prolyl cis-trans isomerase D"/>
    <property type="match status" value="1"/>
</dbReference>
<dbReference type="FunFam" id="1.25.40.10:FF:000029">
    <property type="entry name" value="peptidyl-prolyl cis-trans isomerase D"/>
    <property type="match status" value="1"/>
</dbReference>
<dbReference type="Gene3D" id="2.40.100.10">
    <property type="entry name" value="Cyclophilin-like"/>
    <property type="match status" value="1"/>
</dbReference>
<dbReference type="Gene3D" id="1.25.40.10">
    <property type="entry name" value="Tetratricopeptide repeat domain"/>
    <property type="match status" value="1"/>
</dbReference>
<dbReference type="InterPro" id="IPR029000">
    <property type="entry name" value="Cyclophilin-like_dom_sf"/>
</dbReference>
<dbReference type="InterPro" id="IPR020892">
    <property type="entry name" value="Cyclophilin-type_PPIase_CS"/>
</dbReference>
<dbReference type="InterPro" id="IPR002130">
    <property type="entry name" value="Cyclophilin-type_PPIase_dom"/>
</dbReference>
<dbReference type="InterPro" id="IPR011990">
    <property type="entry name" value="TPR-like_helical_dom_sf"/>
</dbReference>
<dbReference type="InterPro" id="IPR019734">
    <property type="entry name" value="TPR_rpt"/>
</dbReference>
<dbReference type="PANTHER" id="PTHR11071">
    <property type="entry name" value="PEPTIDYL-PROLYL CIS-TRANS ISOMERASE"/>
    <property type="match status" value="1"/>
</dbReference>
<dbReference type="PANTHER" id="PTHR11071:SF561">
    <property type="entry name" value="PEPTIDYL-PROLYL CIS-TRANS ISOMERASE D-RELATED"/>
    <property type="match status" value="1"/>
</dbReference>
<dbReference type="Pfam" id="PF00160">
    <property type="entry name" value="Pro_isomerase"/>
    <property type="match status" value="1"/>
</dbReference>
<dbReference type="PRINTS" id="PR00153">
    <property type="entry name" value="CSAPPISMRASE"/>
</dbReference>
<dbReference type="SMART" id="SM00028">
    <property type="entry name" value="TPR"/>
    <property type="match status" value="3"/>
</dbReference>
<dbReference type="SUPFAM" id="SSF50891">
    <property type="entry name" value="Cyclophilin-like"/>
    <property type="match status" value="1"/>
</dbReference>
<dbReference type="SUPFAM" id="SSF48452">
    <property type="entry name" value="TPR-like"/>
    <property type="match status" value="1"/>
</dbReference>
<dbReference type="PROSITE" id="PS00170">
    <property type="entry name" value="CSA_PPIASE_1"/>
    <property type="match status" value="1"/>
</dbReference>
<dbReference type="PROSITE" id="PS50072">
    <property type="entry name" value="CSA_PPIASE_2"/>
    <property type="match status" value="1"/>
</dbReference>
<dbReference type="PROSITE" id="PS50005">
    <property type="entry name" value="TPR"/>
    <property type="match status" value="3"/>
</dbReference>
<dbReference type="PROSITE" id="PS50293">
    <property type="entry name" value="TPR_REGION"/>
    <property type="match status" value="1"/>
</dbReference>
<feature type="chain" id="PRO_0000232950" description="Peptidyl-prolyl cis-trans isomerase D">
    <location>
        <begin position="1"/>
        <end position="372"/>
    </location>
</feature>
<feature type="domain" description="PPIase cyclophilin-type" evidence="2">
    <location>
        <begin position="9"/>
        <end position="175"/>
    </location>
</feature>
<feature type="repeat" description="TPR 1">
    <location>
        <begin position="220"/>
        <end position="253"/>
    </location>
</feature>
<feature type="repeat" description="TPR 2">
    <location>
        <begin position="271"/>
        <end position="304"/>
    </location>
</feature>
<feature type="repeat" description="TPR 3">
    <location>
        <begin position="309"/>
        <end position="342"/>
    </location>
</feature>
<sequence length="372" mass="41319">MSETRPKTFFDISIGGKPAGRIVFELYSDVVPKTAENFLKLCEGNSGFAKSKPDIPLSYKGSIFHRVIKSFMCQFGDFTNFNGTGGESIYGEKFEDENFTLKHDKPFLLSMANAGANTNGSQCFITCVPTPHLDGKHVVFGEVIQGKRLVRTIENNATDEADKPAKEVKIEDCGVLPSDYTVPADAEATPTDAYGDNYEENITDDSKVDPNDVNSVLNAVEAVKEIGTKQFKEKNFEVALVKYEKSSQMLKQYFPQDLPEEDVKKIDALRVSLFLNIALVSLKSKNYSRTLSAATEALHADNTDDKSKAKALYRRGLAYYYTKNAEMAVTDLELATTYQPHDTAIIKALQDAKKAKKELIAKQKKSLSKMFS</sequence>
<comment type="function">
    <text evidence="1">PPIases accelerate the folding of proteins. It catalyzes the cis-trans isomerization of proline imidic peptide bonds in oligopeptides (By similarity).</text>
</comment>
<comment type="catalytic activity">
    <reaction>
        <text>[protein]-peptidylproline (omega=180) = [protein]-peptidylproline (omega=0)</text>
        <dbReference type="Rhea" id="RHEA:16237"/>
        <dbReference type="Rhea" id="RHEA-COMP:10747"/>
        <dbReference type="Rhea" id="RHEA-COMP:10748"/>
        <dbReference type="ChEBI" id="CHEBI:83833"/>
        <dbReference type="ChEBI" id="CHEBI:83834"/>
        <dbReference type="EC" id="5.2.1.8"/>
    </reaction>
</comment>
<comment type="subcellular location">
    <subcellularLocation>
        <location evidence="1">Cytoplasm</location>
    </subcellularLocation>
</comment>
<comment type="similarity">
    <text evidence="3">Belongs to the cyclophilin-type PPIase family. PPIase D subfamily.</text>
</comment>